<reference key="1">
    <citation type="journal article" date="2005" name="J. Am. Chem. Soc.">
        <title>A plant type III polyketide synthase that produces pentaketide chromone.</title>
        <authorList>
            <person name="Abe I."/>
            <person name="Utsumi Y."/>
            <person name="Oguro S."/>
            <person name="Morita H."/>
            <person name="Sano Y."/>
            <person name="Noguchi H."/>
        </authorList>
    </citation>
    <scope>NUCLEOTIDE SEQUENCE [MRNA]</scope>
    <scope>FUNCTION</scope>
    <scope>CATALYTIC ACTIVITY</scope>
    <scope>SUBUNIT</scope>
    <scope>BIOPHYSICOCHEMICAL PROPERTIES</scope>
    <scope>MUTAGENESIS OF MET-207</scope>
</reference>
<reference key="2">
    <citation type="journal article" date="2006" name="Acta Crystallogr. F">
        <title>Crystallization and preliminary crystallographic analysis of a novel plant type III polyketide synthase that produces pentaketide chromone.</title>
        <authorList>
            <person name="Morita H."/>
            <person name="Kondo S."/>
            <person name="Abe T."/>
            <person name="Noguchi H."/>
            <person name="Sugio S."/>
            <person name="Abe I."/>
            <person name="Kohno T."/>
        </authorList>
    </citation>
    <scope>CRYSTALLIZATION</scope>
</reference>
<reference key="3">
    <citation type="journal article" date="2007" name="Chem. Biol.">
        <title>Structural insight into chain-length control and product specificity of pentaketide chromone synthase from Aloe arborescens.</title>
        <authorList>
            <person name="Morita H."/>
            <person name="Kondo S."/>
            <person name="Oguro S."/>
            <person name="Noguchi H."/>
            <person name="Sugio S."/>
            <person name="Abe I."/>
            <person name="Kohno T."/>
        </authorList>
    </citation>
    <scope>X-RAY CRYSTALLOGRAPHY (1.60 ANGSTROMS) IN COMPLEX WITH COENZYME A</scope>
    <scope>SUBUNIT</scope>
    <scope>OXIDATION AT CYS-174</scope>
</reference>
<sequence length="403" mass="44571">MSSLSNSLPLMEDVQGIRKAQKADGTATVMAIGTAHPPHIFPQDTYADVYFRATNSEHKVELKKKFDHICKKTMIGKRYFNYDEEFLKKYPNITSYDEPSLNDRQDICVPGVPALGTEAAVKAIEEWGRPKSEITHLVFCTSCGVDMPSADFQCAKLLGLHANVNKYCIYMQGCYAGGTVMRYAKDLAENNRGARVLVVCAELTIMMLRAPNETHLDNAIGISLFGDGAAALIIGSDPIIGVEKPMFEIVCTKQTVIPNTEDVIHLHLRETGMMFYLSKGSPMTISNNVEACLIDVFKSVGITPPEDWNSLFWIPHPGGRAILDQVEAKLKLRPEKFRAARTVLWDYGNMVSASVGYILDEMRRKSAAKGLETYGEGLEWGVLLGFGPGITVETILLHSLPLM</sequence>
<keyword id="KW-0002">3D-structure</keyword>
<keyword id="KW-0012">Acyltransferase</keyword>
<keyword id="KW-0284">Flavonoid biosynthesis</keyword>
<keyword id="KW-0558">Oxidation</keyword>
<keyword id="KW-0808">Transferase</keyword>
<dbReference type="EC" id="2.3.1.216"/>
<dbReference type="EMBL" id="AY823626">
    <property type="protein sequence ID" value="AAX35541.1"/>
    <property type="molecule type" value="mRNA"/>
</dbReference>
<dbReference type="PDB" id="2D3M">
    <property type="method" value="X-ray"/>
    <property type="resolution" value="1.60 A"/>
    <property type="chains" value="A/B=1-403"/>
</dbReference>
<dbReference type="PDB" id="2D51">
    <property type="method" value="X-ray"/>
    <property type="resolution" value="1.60 A"/>
    <property type="chains" value="A/B=1-403"/>
</dbReference>
<dbReference type="PDB" id="2D52">
    <property type="method" value="X-ray"/>
    <property type="resolution" value="1.60 A"/>
    <property type="chains" value="A/B=1-403"/>
</dbReference>
<dbReference type="PDBsum" id="2D3M"/>
<dbReference type="PDBsum" id="2D51"/>
<dbReference type="PDBsum" id="2D52"/>
<dbReference type="SMR" id="Q58VP7"/>
<dbReference type="KEGG" id="ag:AAX35541"/>
<dbReference type="UniPathway" id="UPA00154"/>
<dbReference type="EvolutionaryTrace" id="Q58VP7"/>
<dbReference type="GO" id="GO:0016747">
    <property type="term" value="F:acyltransferase activity, transferring groups other than amino-acyl groups"/>
    <property type="evidence" value="ECO:0000314"/>
    <property type="project" value="UniProtKB"/>
</dbReference>
<dbReference type="GO" id="GO:0042803">
    <property type="term" value="F:protein homodimerization activity"/>
    <property type="evidence" value="ECO:0000314"/>
    <property type="project" value="UniProtKB"/>
</dbReference>
<dbReference type="GO" id="GO:0009813">
    <property type="term" value="P:flavonoid biosynthetic process"/>
    <property type="evidence" value="ECO:0000314"/>
    <property type="project" value="UniProtKB"/>
</dbReference>
<dbReference type="GO" id="GO:0030639">
    <property type="term" value="P:polyketide biosynthetic process"/>
    <property type="evidence" value="ECO:0007669"/>
    <property type="project" value="TreeGrafter"/>
</dbReference>
<dbReference type="CDD" id="cd00831">
    <property type="entry name" value="CHS_like"/>
    <property type="match status" value="1"/>
</dbReference>
<dbReference type="FunFam" id="3.40.47.10:FF:000014">
    <property type="entry name" value="Chalcone synthase 1"/>
    <property type="match status" value="1"/>
</dbReference>
<dbReference type="FunFam" id="3.40.47.10:FF:000025">
    <property type="entry name" value="Chalcone synthase 2"/>
    <property type="match status" value="1"/>
</dbReference>
<dbReference type="Gene3D" id="3.40.47.10">
    <property type="match status" value="2"/>
</dbReference>
<dbReference type="InterPro" id="IPR012328">
    <property type="entry name" value="Chalcone/stilbene_synt_C"/>
</dbReference>
<dbReference type="InterPro" id="IPR001099">
    <property type="entry name" value="Chalcone/stilbene_synt_N"/>
</dbReference>
<dbReference type="InterPro" id="IPR011141">
    <property type="entry name" value="Polyketide_synthase_type-III"/>
</dbReference>
<dbReference type="InterPro" id="IPR016039">
    <property type="entry name" value="Thiolase-like"/>
</dbReference>
<dbReference type="PANTHER" id="PTHR11877:SF80">
    <property type="entry name" value="CHALCONE SYNTHASE 1"/>
    <property type="match status" value="1"/>
</dbReference>
<dbReference type="PANTHER" id="PTHR11877">
    <property type="entry name" value="HYDROXYMETHYLGLUTARYL-COA SYNTHASE"/>
    <property type="match status" value="1"/>
</dbReference>
<dbReference type="Pfam" id="PF02797">
    <property type="entry name" value="Chal_sti_synt_C"/>
    <property type="match status" value="1"/>
</dbReference>
<dbReference type="Pfam" id="PF00195">
    <property type="entry name" value="Chal_sti_synt_N"/>
    <property type="match status" value="1"/>
</dbReference>
<dbReference type="PIRSF" id="PIRSF000451">
    <property type="entry name" value="PKS_III"/>
    <property type="match status" value="1"/>
</dbReference>
<dbReference type="SUPFAM" id="SSF53901">
    <property type="entry name" value="Thiolase-like"/>
    <property type="match status" value="2"/>
</dbReference>
<protein>
    <recommendedName>
        <fullName>5,7-dihydroxy-2-methylchromone synthase</fullName>
        <ecNumber>2.3.1.216</ecNumber>
    </recommendedName>
    <alternativeName>
        <fullName>Pentaketide chromone synthase</fullName>
        <shortName>PCS</shortName>
    </alternativeName>
</protein>
<organism>
    <name type="scientific">Aloe arborescens</name>
    <name type="common">Kidachi aloe</name>
    <dbReference type="NCBI Taxonomy" id="45385"/>
    <lineage>
        <taxon>Eukaryota</taxon>
        <taxon>Viridiplantae</taxon>
        <taxon>Streptophyta</taxon>
        <taxon>Embryophyta</taxon>
        <taxon>Tracheophyta</taxon>
        <taxon>Spermatophyta</taxon>
        <taxon>Magnoliopsida</taxon>
        <taxon>Liliopsida</taxon>
        <taxon>Asparagales</taxon>
        <taxon>Asphodelaceae</taxon>
        <taxon>Asphodeloideae</taxon>
        <taxon>Aloe</taxon>
    </lineage>
</organism>
<feature type="chain" id="PRO_0000422574" description="5,7-dihydroxy-2-methylchromone synthase">
    <location>
        <begin position="1"/>
        <end position="403"/>
    </location>
</feature>
<feature type="active site" evidence="1">
    <location>
        <position position="174"/>
    </location>
</feature>
<feature type="binding site" evidence="3">
    <location>
        <position position="68"/>
    </location>
    <ligand>
        <name>CoA</name>
        <dbReference type="ChEBI" id="CHEBI:57287"/>
    </ligand>
</feature>
<feature type="binding site" evidence="3">
    <location>
        <position position="277"/>
    </location>
    <ligand>
        <name>CoA</name>
        <dbReference type="ChEBI" id="CHEBI:57287"/>
    </ligand>
</feature>
<feature type="binding site" evidence="3">
    <location>
        <position position="281"/>
    </location>
    <ligand>
        <name>CoA</name>
        <dbReference type="ChEBI" id="CHEBI:57287"/>
    </ligand>
</feature>
<feature type="binding site">
    <location>
        <begin position="318"/>
        <end position="321"/>
    </location>
    <ligand>
        <name>CoA</name>
        <dbReference type="ChEBI" id="CHEBI:57287"/>
    </ligand>
</feature>
<feature type="site" description="Determines the polyketide chain length and product specificity">
    <location>
        <position position="207"/>
    </location>
</feature>
<feature type="modified residue" description="Cysteine sulfinic acid (-SO2H)" evidence="3">
    <location>
        <position position="174"/>
    </location>
</feature>
<feature type="mutagenesis site" description="Turns into a an octaketide synthase that efficiently produces aromatic octaketides, SEK4 and SEK4b, the products of the minimal polyketide synthase for the benzoisochromanequinone actinorhodin." evidence="2">
    <original>M</original>
    <variation>G</variation>
    <location>
        <position position="207"/>
    </location>
</feature>
<feature type="helix" evidence="5">
    <location>
        <begin position="4"/>
        <end position="6"/>
    </location>
</feature>
<feature type="helix" evidence="5">
    <location>
        <begin position="14"/>
        <end position="21"/>
    </location>
</feature>
<feature type="strand" evidence="5">
    <location>
        <begin position="28"/>
        <end position="35"/>
    </location>
</feature>
<feature type="strand" evidence="5">
    <location>
        <begin position="38"/>
        <end position="42"/>
    </location>
</feature>
<feature type="helix" evidence="5">
    <location>
        <begin position="43"/>
        <end position="45"/>
    </location>
</feature>
<feature type="helix" evidence="5">
    <location>
        <begin position="46"/>
        <end position="53"/>
    </location>
</feature>
<feature type="helix" evidence="5">
    <location>
        <begin position="60"/>
        <end position="72"/>
    </location>
</feature>
<feature type="strand" evidence="5">
    <location>
        <begin position="77"/>
        <end position="81"/>
    </location>
</feature>
<feature type="helix" evidence="5">
    <location>
        <begin position="84"/>
        <end position="87"/>
    </location>
</feature>
<feature type="turn" evidence="5">
    <location>
        <begin position="91"/>
        <end position="93"/>
    </location>
</feature>
<feature type="strand" evidence="5">
    <location>
        <begin position="94"/>
        <end position="99"/>
    </location>
</feature>
<feature type="helix" evidence="5">
    <location>
        <begin position="101"/>
        <end position="127"/>
    </location>
</feature>
<feature type="helix" evidence="5">
    <location>
        <begin position="131"/>
        <end position="133"/>
    </location>
</feature>
<feature type="strand" evidence="5">
    <location>
        <begin position="136"/>
        <end position="143"/>
    </location>
</feature>
<feature type="strand" evidence="5">
    <location>
        <begin position="146"/>
        <end position="148"/>
    </location>
</feature>
<feature type="helix" evidence="5">
    <location>
        <begin position="150"/>
        <end position="158"/>
    </location>
</feature>
<feature type="strand" evidence="5">
    <location>
        <begin position="165"/>
        <end position="171"/>
    </location>
</feature>
<feature type="helix" evidence="5">
    <location>
        <begin position="173"/>
        <end position="175"/>
    </location>
</feature>
<feature type="helix" evidence="5">
    <location>
        <begin position="176"/>
        <end position="189"/>
    </location>
</feature>
<feature type="strand" evidence="5">
    <location>
        <begin position="195"/>
        <end position="202"/>
    </location>
</feature>
<feature type="helix" evidence="5">
    <location>
        <begin position="204"/>
        <end position="206"/>
    </location>
</feature>
<feature type="helix" evidence="5">
    <location>
        <begin position="216"/>
        <end position="222"/>
    </location>
</feature>
<feature type="strand" evidence="5">
    <location>
        <begin position="228"/>
        <end position="237"/>
    </location>
</feature>
<feature type="turn" evidence="5">
    <location>
        <begin position="240"/>
        <end position="242"/>
    </location>
</feature>
<feature type="strand" evidence="5">
    <location>
        <begin position="247"/>
        <end position="256"/>
    </location>
</feature>
<feature type="strand" evidence="5">
    <location>
        <begin position="263"/>
        <end position="269"/>
    </location>
</feature>
<feature type="strand" evidence="5">
    <location>
        <begin position="272"/>
        <end position="277"/>
    </location>
</feature>
<feature type="helix" evidence="5">
    <location>
        <begin position="281"/>
        <end position="298"/>
    </location>
</feature>
<feature type="turn" evidence="5">
    <location>
        <begin position="299"/>
        <end position="301"/>
    </location>
</feature>
<feature type="helix" evidence="5">
    <location>
        <begin position="308"/>
        <end position="310"/>
    </location>
</feature>
<feature type="strand" evidence="5">
    <location>
        <begin position="311"/>
        <end position="315"/>
    </location>
</feature>
<feature type="helix" evidence="5">
    <location>
        <begin position="320"/>
        <end position="329"/>
    </location>
</feature>
<feature type="turn" evidence="5">
    <location>
        <begin position="334"/>
        <end position="337"/>
    </location>
</feature>
<feature type="helix" evidence="5">
    <location>
        <begin position="338"/>
        <end position="347"/>
    </location>
</feature>
<feature type="helix" evidence="5">
    <location>
        <begin position="351"/>
        <end position="353"/>
    </location>
</feature>
<feature type="helix" evidence="5">
    <location>
        <begin position="354"/>
        <end position="368"/>
    </location>
</feature>
<feature type="turn" evidence="5">
    <location>
        <begin position="374"/>
        <end position="377"/>
    </location>
</feature>
<feature type="strand" evidence="5">
    <location>
        <begin position="379"/>
        <end position="387"/>
    </location>
</feature>
<feature type="turn" evidence="5">
    <location>
        <begin position="388"/>
        <end position="390"/>
    </location>
</feature>
<feature type="strand" evidence="5">
    <location>
        <begin position="391"/>
        <end position="399"/>
    </location>
</feature>
<accession>Q58VP7</accession>
<evidence type="ECO:0000250" key="1"/>
<evidence type="ECO:0000269" key="2">
    <source>
    </source>
</evidence>
<evidence type="ECO:0000269" key="3">
    <source>
    </source>
</evidence>
<evidence type="ECO:0000305" key="4"/>
<evidence type="ECO:0007829" key="5">
    <source>
        <dbReference type="PDB" id="2D3M"/>
    </source>
</evidence>
<name>PCS_ALOAR</name>
<proteinExistence type="evidence at protein level"/>
<comment type="function">
    <text evidence="2">Catalyzes the iterative condensations of 5 molecules of malonyl-CoA to produce a pentaketide 5,7-dihydroxy-2-methylchromone.</text>
</comment>
<comment type="catalytic activity">
    <reaction evidence="2">
        <text>5 malonyl-CoA + 4 H(+) = 5,7-dihydroxy-2-methyl-4H-chromen-4-one + 5 CO2 + 5 CoA + H2O</text>
        <dbReference type="Rhea" id="RHEA:34839"/>
        <dbReference type="ChEBI" id="CHEBI:15377"/>
        <dbReference type="ChEBI" id="CHEBI:15378"/>
        <dbReference type="ChEBI" id="CHEBI:16526"/>
        <dbReference type="ChEBI" id="CHEBI:57287"/>
        <dbReference type="ChEBI" id="CHEBI:57384"/>
        <dbReference type="ChEBI" id="CHEBI:77977"/>
        <dbReference type="EC" id="2.3.1.216"/>
    </reaction>
</comment>
<comment type="biophysicochemical properties">
    <kinetics>
        <KM evidence="2">71 uM for malonyl-CoA</KM>
        <text>kcat is 0.445 min(-1).</text>
    </kinetics>
    <phDependence>
        <text evidence="2">Optimum pH is 6.0-8.0.</text>
    </phDependence>
</comment>
<comment type="pathway">
    <text>Secondary metabolite biosynthesis; flavonoid biosynthesis.</text>
</comment>
<comment type="subunit">
    <text evidence="2 3">Homodimer.</text>
</comment>
<comment type="miscellaneous">
    <text>A.arborescens is a medicinal plant rich in aromatic polyketides, such as pharmaceutically important aloenin (hexaketide), aloesin (heptaketide) and barbaloin (octaketide).</text>
</comment>
<comment type="similarity">
    <text evidence="4">Belongs to the thiolase-like superfamily. Chalcone/stilbene synthases family.</text>
</comment>